<keyword id="KW-0009">Actin-binding</keyword>
<keyword id="KW-0020">Allergen</keyword>
<keyword id="KW-0963">Cytoplasm</keyword>
<keyword id="KW-0206">Cytoskeleton</keyword>
<keyword id="KW-1015">Disulfide bond</keyword>
<keyword id="KW-0597">Phosphoprotein</keyword>
<accession>P0DKE1</accession>
<accession>A4GCS1</accession>
<dbReference type="EMBL" id="DQ317576">
    <property type="protein sequence ID" value="ABC47419.1"/>
    <property type="molecule type" value="mRNA"/>
</dbReference>
<dbReference type="SMR" id="P0DKE1"/>
<dbReference type="GO" id="GO:0005938">
    <property type="term" value="C:cell cortex"/>
    <property type="evidence" value="ECO:0007669"/>
    <property type="project" value="TreeGrafter"/>
</dbReference>
<dbReference type="GO" id="GO:0005856">
    <property type="term" value="C:cytoskeleton"/>
    <property type="evidence" value="ECO:0007669"/>
    <property type="project" value="UniProtKB-SubCell"/>
</dbReference>
<dbReference type="GO" id="GO:0003785">
    <property type="term" value="F:actin monomer binding"/>
    <property type="evidence" value="ECO:0007669"/>
    <property type="project" value="TreeGrafter"/>
</dbReference>
<dbReference type="CDD" id="cd00148">
    <property type="entry name" value="PROF"/>
    <property type="match status" value="1"/>
</dbReference>
<dbReference type="FunFam" id="3.30.450.30:FF:000001">
    <property type="entry name" value="Profilin"/>
    <property type="match status" value="1"/>
</dbReference>
<dbReference type="Gene3D" id="3.30.450.30">
    <property type="entry name" value="Dynein light chain 2a, cytoplasmic"/>
    <property type="match status" value="1"/>
</dbReference>
<dbReference type="InterPro" id="IPR048278">
    <property type="entry name" value="PFN"/>
</dbReference>
<dbReference type="InterPro" id="IPR005455">
    <property type="entry name" value="PFN_euk"/>
</dbReference>
<dbReference type="InterPro" id="IPR036140">
    <property type="entry name" value="PFN_sf"/>
</dbReference>
<dbReference type="InterPro" id="IPR027310">
    <property type="entry name" value="Profilin_CS"/>
</dbReference>
<dbReference type="PANTHER" id="PTHR11604">
    <property type="entry name" value="PROFILIN"/>
    <property type="match status" value="1"/>
</dbReference>
<dbReference type="PANTHER" id="PTHR11604:SF25">
    <property type="entry name" value="PROFILIN-5"/>
    <property type="match status" value="1"/>
</dbReference>
<dbReference type="Pfam" id="PF00235">
    <property type="entry name" value="Profilin"/>
    <property type="match status" value="1"/>
</dbReference>
<dbReference type="PRINTS" id="PR00392">
    <property type="entry name" value="PROFILIN"/>
</dbReference>
<dbReference type="PRINTS" id="PR01640">
    <property type="entry name" value="PROFILINPLNT"/>
</dbReference>
<dbReference type="SMART" id="SM00392">
    <property type="entry name" value="PROF"/>
    <property type="match status" value="1"/>
</dbReference>
<dbReference type="SUPFAM" id="SSF55770">
    <property type="entry name" value="Profilin (actin-binding protein)"/>
    <property type="match status" value="1"/>
</dbReference>
<dbReference type="PROSITE" id="PS00414">
    <property type="entry name" value="PROFILIN"/>
    <property type="match status" value="1"/>
</dbReference>
<organism>
    <name type="scientific">Olea europaea</name>
    <name type="common">Common olive</name>
    <dbReference type="NCBI Taxonomy" id="4146"/>
    <lineage>
        <taxon>Eukaryota</taxon>
        <taxon>Viridiplantae</taxon>
        <taxon>Streptophyta</taxon>
        <taxon>Embryophyta</taxon>
        <taxon>Tracheophyta</taxon>
        <taxon>Spermatophyta</taxon>
        <taxon>Magnoliopsida</taxon>
        <taxon>eudicotyledons</taxon>
        <taxon>Gunneridae</taxon>
        <taxon>Pentapetalae</taxon>
        <taxon>asterids</taxon>
        <taxon>lamiids</taxon>
        <taxon>Lamiales</taxon>
        <taxon>Oleaceae</taxon>
        <taxon>Oleeae</taxon>
        <taxon>Olea</taxon>
    </lineage>
</organism>
<feature type="initiator methionine" description="Removed" evidence="1">
    <location>
        <position position="1"/>
    </location>
</feature>
<feature type="chain" id="PRO_0000424984" description="Profilin-1">
    <location>
        <begin position="2"/>
        <end position="134"/>
    </location>
</feature>
<feature type="short sequence motif" description="Involved in PIP2 interaction">
    <location>
        <begin position="84"/>
        <end position="100"/>
    </location>
</feature>
<feature type="modified residue" description="Phosphothreonine" evidence="1">
    <location>
        <position position="114"/>
    </location>
</feature>
<feature type="disulfide bond" evidence="3">
    <location>
        <begin position="13"/>
        <end position="118"/>
    </location>
</feature>
<sequence length="134" mass="14418">MSWQAYVDDHLMCDIEGHEGHRLTAAAIVGQDGSVWAQSATFPQFKPEEMNGIMTDFNEPGHLAPTGLHLGGTKYMVIQGEAGAVIRGKKGSGGITIKKTGQALVFGIYEEPVTPGQCNMVVERLGDYLLEQGL</sequence>
<reference key="1">
    <citation type="journal article" date="2012" name="PLoS ONE">
        <title>Characterization of profilin polymorphism in pollen with a focus on multifunctionality.</title>
        <authorList>
            <person name="Jimenez-Lopez J.C."/>
            <person name="Morales S."/>
            <person name="Castro A.J."/>
            <person name="Volkmann D."/>
            <person name="Rodriguez-Garcia M.I."/>
            <person name="Alche Jde D."/>
        </authorList>
    </citation>
    <scope>NUCLEOTIDE SEQUENCE [MRNA]</scope>
    <scope>POLYMORPHISM</scope>
    <source>
        <strain>cv. Morrut</strain>
        <tissue>Pollen</tissue>
    </source>
</reference>
<reference key="2">
    <citation type="journal article" date="2013" name="PLoS ONE">
        <title>Analysis of the effects of polymorphism on pollen profilin structural functionality and the generation of conformational, T- and B-cell epitopes.</title>
        <authorList>
            <person name="Jimenez-Lopez J.C."/>
            <person name="Rodriguez-Garcia M.I."/>
            <person name="Alche J.D."/>
        </authorList>
    </citation>
    <scope>3D-STRUCTURE MODELING</scope>
    <scope>DISULFIDE BOND</scope>
</reference>
<protein>
    <recommendedName>
        <fullName>Profilin-1</fullName>
    </recommendedName>
    <alternativeName>
        <fullName>Pollen allergen Ole e 2</fullName>
    </alternativeName>
    <allergenName>Ole e 2</allergenName>
</protein>
<comment type="function">
    <text evidence="1">Binds to actin and affects the structure of the cytoskeleton. At high concentrations, profilin prevents the polymerization of actin, whereas it enhances it at low concentrations (By similarity).</text>
</comment>
<comment type="subunit">
    <text evidence="1">Occurs in many kinds of cells as a complex with monomeric actin in a 1:1 ratio.</text>
</comment>
<comment type="subcellular location">
    <subcellularLocation>
        <location evidence="1">Cytoplasm</location>
        <location evidence="1">Cytoskeleton</location>
    </subcellularLocation>
</comment>
<comment type="PTM">
    <text evidence="1">Phosphorylated by MAP kinases.</text>
</comment>
<comment type="polymorphism">
    <text>Several isoforms of the allergen exist due to polymorphism.</text>
</comment>
<comment type="allergen">
    <text>Causes an allergic reaction in human.</text>
</comment>
<comment type="miscellaneous">
    <text evidence="3">The variability of the residues taking part of IgE-binding epitopes might be responsible of the difference in cross-reactivity among olive pollen cultivars, and between distantly related pollen species, leading to a variable range of allergy reactions among atopic patients.</text>
</comment>
<comment type="similarity">
    <text evidence="2">Belongs to the profilin family.</text>
</comment>
<evidence type="ECO:0000250" key="1"/>
<evidence type="ECO:0000305" key="2"/>
<evidence type="ECO:0000305" key="3">
    <source>
    </source>
</evidence>
<proteinExistence type="evidence at protein level"/>
<name>PROFS_OLEEU</name>